<organism>
    <name type="scientific">Synechococcus elongatus (strain ATCC 33912 / PCC 7942 / FACHB-805)</name>
    <name type="common">Anacystis nidulans R2</name>
    <dbReference type="NCBI Taxonomy" id="1140"/>
    <lineage>
        <taxon>Bacteria</taxon>
        <taxon>Bacillati</taxon>
        <taxon>Cyanobacteriota</taxon>
        <taxon>Cyanophyceae</taxon>
        <taxon>Synechococcales</taxon>
        <taxon>Synechococcaceae</taxon>
        <taxon>Synechococcus</taxon>
    </lineage>
</organism>
<comment type="similarity">
    <text evidence="2">Belongs to the bacterial ribosomal protein bL27 family.</text>
</comment>
<reference key="1">
    <citation type="journal article" date="1998" name="Science">
        <title>Expression of a gene cluster kaiABC as a circadian feedback process in cyanobacteria.</title>
        <authorList>
            <person name="Ishiura M."/>
            <person name="Kutsuna S."/>
            <person name="Aoki S."/>
            <person name="Iwasaki H."/>
            <person name="Andersson C.R."/>
            <person name="Tanabe A."/>
            <person name="Golden S.S."/>
            <person name="Johnson C.H."/>
            <person name="Kondo T."/>
        </authorList>
    </citation>
    <scope>NUCLEOTIDE SEQUENCE [GENOMIC DNA]</scope>
</reference>
<reference key="2">
    <citation type="submission" date="2002-06" db="EMBL/GenBank/DDBJ databases">
        <title>Synechococcus elongatus PCC7942 cosmid 7G3.</title>
        <authorList>
            <person name="Holtman C.K."/>
            <person name="Sandoval P."/>
            <person name="Chen Y."/>
            <person name="Socias T."/>
            <person name="Mohler B.J."/>
            <person name="McMurtry S."/>
            <person name="Gonzalez A."/>
            <person name="Salinas I."/>
            <person name="Golden S.S."/>
            <person name="Youderian P."/>
        </authorList>
    </citation>
    <scope>NUCLEOTIDE SEQUENCE [GENOMIC DNA]</scope>
</reference>
<reference key="3">
    <citation type="submission" date="2005-08" db="EMBL/GenBank/DDBJ databases">
        <title>Complete sequence of chromosome 1 of Synechococcus elongatus PCC 7942.</title>
        <authorList>
            <consortium name="US DOE Joint Genome Institute"/>
            <person name="Copeland A."/>
            <person name="Lucas S."/>
            <person name="Lapidus A."/>
            <person name="Barry K."/>
            <person name="Detter J.C."/>
            <person name="Glavina T."/>
            <person name="Hammon N."/>
            <person name="Israni S."/>
            <person name="Pitluck S."/>
            <person name="Schmutz J."/>
            <person name="Larimer F."/>
            <person name="Land M."/>
            <person name="Kyrpides N."/>
            <person name="Lykidis A."/>
            <person name="Golden S."/>
            <person name="Richardson P."/>
        </authorList>
    </citation>
    <scope>NUCLEOTIDE SEQUENCE [LARGE SCALE GENOMIC DNA]</scope>
    <source>
        <strain>ATCC 33912 / PCC 7942 / FACHB-805</strain>
    </source>
</reference>
<gene>
    <name type="primary">rpmA</name>
    <name type="synonym">rpl27</name>
    <name type="ordered locus">Synpcc7942_1220</name>
    <name type="ORF">sef0007</name>
</gene>
<sequence>MAHKKGTGSTRNGRDSNAQRLGVKKFGGEVVRSGSIIVRQRGTKFHPGVNVGRGGDDTLFALIDGVVTFERKGKGGKKVSVYPAGEAA</sequence>
<keyword id="KW-1185">Reference proteome</keyword>
<keyword id="KW-0687">Ribonucleoprotein</keyword>
<keyword id="KW-0689">Ribosomal protein</keyword>
<protein>
    <recommendedName>
        <fullName evidence="2">Large ribosomal subunit protein bL27</fullName>
    </recommendedName>
    <alternativeName>
        <fullName>50S ribosomal protein L27</fullName>
    </alternativeName>
</protein>
<dbReference type="EMBL" id="AB010691">
    <property type="protein sequence ID" value="BAA37099.1"/>
    <property type="molecule type" value="Genomic_DNA"/>
</dbReference>
<dbReference type="EMBL" id="AY120853">
    <property type="protein sequence ID" value="AAM82682.1"/>
    <property type="molecule type" value="Genomic_DNA"/>
</dbReference>
<dbReference type="EMBL" id="CP000100">
    <property type="protein sequence ID" value="ABB57250.1"/>
    <property type="molecule type" value="Genomic_DNA"/>
</dbReference>
<dbReference type="PIR" id="T44265">
    <property type="entry name" value="T44265"/>
</dbReference>
<dbReference type="RefSeq" id="WP_011242644.1">
    <property type="nucleotide sequence ID" value="NZ_JACJTX010000003.1"/>
</dbReference>
<dbReference type="SMR" id="Q9Z3H6"/>
<dbReference type="STRING" id="1140.Synpcc7942_1220"/>
<dbReference type="PaxDb" id="1140-Synpcc7942_1220"/>
<dbReference type="GeneID" id="72430079"/>
<dbReference type="KEGG" id="syf:Synpcc7942_1220"/>
<dbReference type="eggNOG" id="COG0211">
    <property type="taxonomic scope" value="Bacteria"/>
</dbReference>
<dbReference type="HOGENOM" id="CLU_095424_4_0_3"/>
<dbReference type="OrthoDB" id="9803474at2"/>
<dbReference type="BioCyc" id="SYNEL:SYNPCC7942_1220-MONOMER"/>
<dbReference type="Proteomes" id="UP000889800">
    <property type="component" value="Chromosome"/>
</dbReference>
<dbReference type="GO" id="GO:0022625">
    <property type="term" value="C:cytosolic large ribosomal subunit"/>
    <property type="evidence" value="ECO:0007669"/>
    <property type="project" value="TreeGrafter"/>
</dbReference>
<dbReference type="GO" id="GO:0003735">
    <property type="term" value="F:structural constituent of ribosome"/>
    <property type="evidence" value="ECO:0007669"/>
    <property type="project" value="InterPro"/>
</dbReference>
<dbReference type="GO" id="GO:0006412">
    <property type="term" value="P:translation"/>
    <property type="evidence" value="ECO:0007669"/>
    <property type="project" value="UniProtKB-UniRule"/>
</dbReference>
<dbReference type="FunFam" id="2.40.50.100:FF:000004">
    <property type="entry name" value="50S ribosomal protein L27"/>
    <property type="match status" value="1"/>
</dbReference>
<dbReference type="Gene3D" id="2.40.50.100">
    <property type="match status" value="1"/>
</dbReference>
<dbReference type="HAMAP" id="MF_00539">
    <property type="entry name" value="Ribosomal_bL27"/>
    <property type="match status" value="1"/>
</dbReference>
<dbReference type="InterPro" id="IPR001684">
    <property type="entry name" value="Ribosomal_bL27"/>
</dbReference>
<dbReference type="InterPro" id="IPR018261">
    <property type="entry name" value="Ribosomal_bL27_CS"/>
</dbReference>
<dbReference type="NCBIfam" id="TIGR00062">
    <property type="entry name" value="L27"/>
    <property type="match status" value="1"/>
</dbReference>
<dbReference type="PANTHER" id="PTHR15893:SF0">
    <property type="entry name" value="LARGE RIBOSOMAL SUBUNIT PROTEIN BL27M"/>
    <property type="match status" value="1"/>
</dbReference>
<dbReference type="PANTHER" id="PTHR15893">
    <property type="entry name" value="RIBOSOMAL PROTEIN L27"/>
    <property type="match status" value="1"/>
</dbReference>
<dbReference type="Pfam" id="PF01016">
    <property type="entry name" value="Ribosomal_L27"/>
    <property type="match status" value="1"/>
</dbReference>
<dbReference type="PRINTS" id="PR00063">
    <property type="entry name" value="RIBOSOMALL27"/>
</dbReference>
<dbReference type="SUPFAM" id="SSF110324">
    <property type="entry name" value="Ribosomal L27 protein-like"/>
    <property type="match status" value="1"/>
</dbReference>
<dbReference type="PROSITE" id="PS00831">
    <property type="entry name" value="RIBOSOMAL_L27"/>
    <property type="match status" value="1"/>
</dbReference>
<feature type="chain" id="PRO_0000181189" description="Large ribosomal subunit protein bL27">
    <location>
        <begin position="1"/>
        <end position="88"/>
    </location>
</feature>
<feature type="region of interest" description="Disordered" evidence="1">
    <location>
        <begin position="1"/>
        <end position="23"/>
    </location>
</feature>
<feature type="compositionally biased region" description="Polar residues" evidence="1">
    <location>
        <begin position="7"/>
        <end position="19"/>
    </location>
</feature>
<accession>Q9Z3H6</accession>
<accession>Q31NW9</accession>
<accession>Q79PF8</accession>
<evidence type="ECO:0000256" key="1">
    <source>
        <dbReference type="SAM" id="MobiDB-lite"/>
    </source>
</evidence>
<evidence type="ECO:0000305" key="2"/>
<name>RL27_SYNE7</name>
<proteinExistence type="inferred from homology"/>